<accession>P32801</accession>
<accession>D6VXN9</accession>
<keyword id="KW-0067">ATP-binding</keyword>
<keyword id="KW-0131">Cell cycle</keyword>
<keyword id="KW-0418">Kinase</keyword>
<keyword id="KW-0460">Magnesium</keyword>
<keyword id="KW-0479">Metal-binding</keyword>
<keyword id="KW-0547">Nucleotide-binding</keyword>
<keyword id="KW-0597">Phosphoprotein</keyword>
<keyword id="KW-1185">Reference proteome</keyword>
<keyword id="KW-0723">Serine/threonine-protein kinase</keyword>
<keyword id="KW-0808">Transferase</keyword>
<organism>
    <name type="scientific">Saccharomyces cerevisiae (strain ATCC 204508 / S288c)</name>
    <name type="common">Baker's yeast</name>
    <dbReference type="NCBI Taxonomy" id="559292"/>
    <lineage>
        <taxon>Eukaryota</taxon>
        <taxon>Fungi</taxon>
        <taxon>Dikarya</taxon>
        <taxon>Ascomycota</taxon>
        <taxon>Saccharomycotina</taxon>
        <taxon>Saccharomycetes</taxon>
        <taxon>Saccharomycetales</taxon>
        <taxon>Saccharomycetaceae</taxon>
        <taxon>Saccharomyces</taxon>
    </lineage>
</organism>
<gene>
    <name type="primary">ELM1</name>
    <name type="ordered locus">YKL048C</name>
    <name type="ORF">YKL261</name>
</gene>
<dbReference type="EC" id="2.7.11.1"/>
<dbReference type="EMBL" id="M81258">
    <property type="protein sequence ID" value="AAA02892.1"/>
    <property type="status" value="ALT_FRAME"/>
    <property type="molecule type" value="Unassigned_DNA"/>
</dbReference>
<dbReference type="EMBL" id="X71621">
    <property type="status" value="NOT_ANNOTATED_CDS"/>
    <property type="molecule type" value="Genomic_DNA"/>
</dbReference>
<dbReference type="EMBL" id="Z28048">
    <property type="protein sequence ID" value="CAA81883.1"/>
    <property type="molecule type" value="Genomic_DNA"/>
</dbReference>
<dbReference type="EMBL" id="BK006944">
    <property type="protein sequence ID" value="DAA09109.1"/>
    <property type="molecule type" value="Genomic_DNA"/>
</dbReference>
<dbReference type="PIR" id="S37869">
    <property type="entry name" value="S37869"/>
</dbReference>
<dbReference type="RefSeq" id="NP_012876.1">
    <property type="nucleotide sequence ID" value="NM_001179614.1"/>
</dbReference>
<dbReference type="SMR" id="P32801"/>
<dbReference type="BioGRID" id="34085">
    <property type="interactions" value="812"/>
</dbReference>
<dbReference type="DIP" id="DIP-2731N"/>
<dbReference type="FunCoup" id="P32801">
    <property type="interactions" value="381"/>
</dbReference>
<dbReference type="IntAct" id="P32801">
    <property type="interactions" value="9"/>
</dbReference>
<dbReference type="MINT" id="P32801"/>
<dbReference type="STRING" id="4932.YKL048C"/>
<dbReference type="iPTMnet" id="P32801"/>
<dbReference type="PaxDb" id="4932-YKL048C"/>
<dbReference type="PeptideAtlas" id="P32801"/>
<dbReference type="EnsemblFungi" id="YKL048C_mRNA">
    <property type="protein sequence ID" value="YKL048C"/>
    <property type="gene ID" value="YKL048C"/>
</dbReference>
<dbReference type="GeneID" id="853818"/>
<dbReference type="KEGG" id="sce:YKL048C"/>
<dbReference type="AGR" id="SGD:S000001531"/>
<dbReference type="SGD" id="S000001531">
    <property type="gene designation" value="ELM1"/>
</dbReference>
<dbReference type="VEuPathDB" id="FungiDB:YKL048C"/>
<dbReference type="eggNOG" id="KOG0585">
    <property type="taxonomic scope" value="Eukaryota"/>
</dbReference>
<dbReference type="HOGENOM" id="CLU_019325_0_0_1"/>
<dbReference type="InParanoid" id="P32801"/>
<dbReference type="OrthoDB" id="68483at2759"/>
<dbReference type="BioCyc" id="YEAST:G3O-31849-MONOMER"/>
<dbReference type="BRENDA" id="2.7.10.2">
    <property type="organism ID" value="984"/>
</dbReference>
<dbReference type="BioGRID-ORCS" id="853818">
    <property type="hits" value="7 hits in 13 CRISPR screens"/>
</dbReference>
<dbReference type="PRO" id="PR:P32801"/>
<dbReference type="Proteomes" id="UP000002311">
    <property type="component" value="Chromosome XI"/>
</dbReference>
<dbReference type="RNAct" id="P32801">
    <property type="molecule type" value="protein"/>
</dbReference>
<dbReference type="GO" id="GO:0005935">
    <property type="term" value="C:cellular bud neck"/>
    <property type="evidence" value="ECO:0007005"/>
    <property type="project" value="SGD"/>
</dbReference>
<dbReference type="GO" id="GO:0000144">
    <property type="term" value="C:cellular bud neck septin ring"/>
    <property type="evidence" value="ECO:0000314"/>
    <property type="project" value="SGD"/>
</dbReference>
<dbReference type="GO" id="GO:0005737">
    <property type="term" value="C:cytoplasm"/>
    <property type="evidence" value="ECO:0000318"/>
    <property type="project" value="GO_Central"/>
</dbReference>
<dbReference type="GO" id="GO:0005524">
    <property type="term" value="F:ATP binding"/>
    <property type="evidence" value="ECO:0007669"/>
    <property type="project" value="UniProtKB-KW"/>
</dbReference>
<dbReference type="GO" id="GO:0046872">
    <property type="term" value="F:metal ion binding"/>
    <property type="evidence" value="ECO:0007669"/>
    <property type="project" value="UniProtKB-KW"/>
</dbReference>
<dbReference type="GO" id="GO:0004672">
    <property type="term" value="F:protein kinase activity"/>
    <property type="evidence" value="ECO:0007005"/>
    <property type="project" value="SGD"/>
</dbReference>
<dbReference type="GO" id="GO:0106310">
    <property type="term" value="F:protein serine kinase activity"/>
    <property type="evidence" value="ECO:0007669"/>
    <property type="project" value="RHEA"/>
</dbReference>
<dbReference type="GO" id="GO:0004674">
    <property type="term" value="F:protein serine/threonine kinase activity"/>
    <property type="evidence" value="ECO:0000314"/>
    <property type="project" value="SGD"/>
</dbReference>
<dbReference type="GO" id="GO:0007117">
    <property type="term" value="P:budding cell bud growth"/>
    <property type="evidence" value="ECO:0000315"/>
    <property type="project" value="SGD"/>
</dbReference>
<dbReference type="GO" id="GO:0000902">
    <property type="term" value="P:cell morphogenesis"/>
    <property type="evidence" value="ECO:0000315"/>
    <property type="project" value="SGD"/>
</dbReference>
<dbReference type="GO" id="GO:0042149">
    <property type="term" value="P:cellular response to glucose starvation"/>
    <property type="evidence" value="ECO:0000315"/>
    <property type="project" value="SGD"/>
</dbReference>
<dbReference type="GO" id="GO:0000023">
    <property type="term" value="P:maltose metabolic process"/>
    <property type="evidence" value="ECO:0000315"/>
    <property type="project" value="SGD"/>
</dbReference>
<dbReference type="GO" id="GO:0000281">
    <property type="term" value="P:mitotic cytokinesis"/>
    <property type="evidence" value="ECO:0000315"/>
    <property type="project" value="SGD"/>
</dbReference>
<dbReference type="GO" id="GO:1902935">
    <property type="term" value="P:protein localization to septin ring"/>
    <property type="evidence" value="ECO:0000315"/>
    <property type="project" value="SGD"/>
</dbReference>
<dbReference type="GO" id="GO:0007124">
    <property type="term" value="P:pseudohyphal growth"/>
    <property type="evidence" value="ECO:0000315"/>
    <property type="project" value="SGD"/>
</dbReference>
<dbReference type="GO" id="GO:0051726">
    <property type="term" value="P:regulation of cell cycle"/>
    <property type="evidence" value="ECO:0000318"/>
    <property type="project" value="GO_Central"/>
</dbReference>
<dbReference type="GO" id="GO:0000921">
    <property type="term" value="P:septin ring assembly"/>
    <property type="evidence" value="ECO:0000315"/>
    <property type="project" value="SGD"/>
</dbReference>
<dbReference type="Gene3D" id="3.30.200.20">
    <property type="entry name" value="Phosphorylase Kinase, domain 1"/>
    <property type="match status" value="1"/>
</dbReference>
<dbReference type="Gene3D" id="1.10.510.10">
    <property type="entry name" value="Transferase(Phosphotransferase) domain 1"/>
    <property type="match status" value="1"/>
</dbReference>
<dbReference type="InterPro" id="IPR011009">
    <property type="entry name" value="Kinase-like_dom_sf"/>
</dbReference>
<dbReference type="InterPro" id="IPR000719">
    <property type="entry name" value="Prot_kinase_dom"/>
</dbReference>
<dbReference type="InterPro" id="IPR008271">
    <property type="entry name" value="Ser/Thr_kinase_AS"/>
</dbReference>
<dbReference type="PANTHER" id="PTHR43895">
    <property type="entry name" value="CALCIUM/CALMODULIN-DEPENDENT PROTEIN KINASE KINASE-RELATED"/>
    <property type="match status" value="1"/>
</dbReference>
<dbReference type="PANTHER" id="PTHR43895:SF152">
    <property type="entry name" value="SERINE_THREONINE-PROTEIN KINASE TOS3"/>
    <property type="match status" value="1"/>
</dbReference>
<dbReference type="Pfam" id="PF00069">
    <property type="entry name" value="Pkinase"/>
    <property type="match status" value="1"/>
</dbReference>
<dbReference type="SMART" id="SM00220">
    <property type="entry name" value="S_TKc"/>
    <property type="match status" value="1"/>
</dbReference>
<dbReference type="SUPFAM" id="SSF56112">
    <property type="entry name" value="Protein kinase-like (PK-like)"/>
    <property type="match status" value="1"/>
</dbReference>
<dbReference type="PROSITE" id="PS50011">
    <property type="entry name" value="PROTEIN_KINASE_DOM"/>
    <property type="match status" value="1"/>
</dbReference>
<dbReference type="PROSITE" id="PS00108">
    <property type="entry name" value="PROTEIN_KINASE_ST"/>
    <property type="match status" value="1"/>
</dbReference>
<comment type="function">
    <text evidence="5 7">Important role in G1 events required for bud emergence and septin organization. Coordinates cell growth and cell division at G2/M, essential for efficient cytokinesis and for regulation of SWE1.</text>
</comment>
<comment type="catalytic activity">
    <reaction>
        <text>L-seryl-[protein] + ATP = O-phospho-L-seryl-[protein] + ADP + H(+)</text>
        <dbReference type="Rhea" id="RHEA:17989"/>
        <dbReference type="Rhea" id="RHEA-COMP:9863"/>
        <dbReference type="Rhea" id="RHEA-COMP:11604"/>
        <dbReference type="ChEBI" id="CHEBI:15378"/>
        <dbReference type="ChEBI" id="CHEBI:29999"/>
        <dbReference type="ChEBI" id="CHEBI:30616"/>
        <dbReference type="ChEBI" id="CHEBI:83421"/>
        <dbReference type="ChEBI" id="CHEBI:456216"/>
        <dbReference type="EC" id="2.7.11.1"/>
    </reaction>
</comment>
<comment type="catalytic activity">
    <reaction>
        <text>L-threonyl-[protein] + ATP = O-phospho-L-threonyl-[protein] + ADP + H(+)</text>
        <dbReference type="Rhea" id="RHEA:46608"/>
        <dbReference type="Rhea" id="RHEA-COMP:11060"/>
        <dbReference type="Rhea" id="RHEA-COMP:11605"/>
        <dbReference type="ChEBI" id="CHEBI:15378"/>
        <dbReference type="ChEBI" id="CHEBI:30013"/>
        <dbReference type="ChEBI" id="CHEBI:30616"/>
        <dbReference type="ChEBI" id="CHEBI:61977"/>
        <dbReference type="ChEBI" id="CHEBI:456216"/>
        <dbReference type="EC" id="2.7.11.1"/>
    </reaction>
</comment>
<comment type="cofactor">
    <cofactor evidence="1">
        <name>Mg(2+)</name>
        <dbReference type="ChEBI" id="CHEBI:18420"/>
    </cofactor>
</comment>
<comment type="miscellaneous">
    <text evidence="6">Present with 149 molecules/cell in log phase SD medium.</text>
</comment>
<comment type="similarity">
    <text evidence="2">Belongs to the protein kinase superfamily. Ser/Thr protein kinase family.</text>
</comment>
<comment type="sequence caution" evidence="8">
    <conflict type="frameshift">
        <sequence resource="EMBL-CDS" id="AAA02892"/>
    </conflict>
</comment>
<proteinExistence type="evidence at protein level"/>
<sequence>MSPRQLIPTLIPEWAPLSQQSCIREDELDSPPITPTSQTSSFGSSFSQQKPTYSTIIGENIHTILDEIRPYVKKITVSDQDKKTINQYTLGVSAGSGQFGYVRKAYSSTLGKVVAVKIIPKKPWNAQQYSVNQVMRQIQLWKSKGKITTNMSGNEAMRLMNIEKCRWEIFAASRLRNNVHIVRLIECLDSPFSESIWIVTNWCSLGELQWKRDDDEDILPQWKKIVISNCSVSTFAKKILEDMTKGLEYLHSQGCIHRDIKPSNILLDEEEKVAKLSDFGSCIFTPQSLPFSDANFEDCFQRELNKIVGTPAFIAPELCHLGNSKRDFVTDGFKLDIWSLGVTLYCLLYNELPFFGENEFETYHKIIEVSLSSKINGNTLNDLVIKRLLEKDVTLRISIQDLVKVLSRDQPIDSRNHSQISSSSVNPVRNEGPVRRFFGRLLTKKGKKKTSGKGKDKVLVSATSKVTPSIHIDEEPDKECFSTTVLRSSPDSSDYCSSLGEEAIQVTDFLDTFCRSNESLPNLTVNNDKQNSDMKTDRSESSSHSSLKIPTPIKAMIRLKSSPKENGNRTHINCSQDKPSSPLMDRTVGKRTVNNSGARKLAHSSNILNFKAYINSEDSDIRETVEDVKTYLNFADNGQI</sequence>
<feature type="chain" id="PRO_0000085951" description="Serine/threonine-protein kinase ELM1">
    <location>
        <begin position="1"/>
        <end position="640"/>
    </location>
</feature>
<feature type="domain" description="Protein kinase" evidence="2">
    <location>
        <begin position="88"/>
        <end position="420"/>
    </location>
</feature>
<feature type="region of interest" description="Disordered" evidence="4">
    <location>
        <begin position="27"/>
        <end position="47"/>
    </location>
</feature>
<feature type="region of interest" description="Disordered" evidence="4">
    <location>
        <begin position="520"/>
        <end position="547"/>
    </location>
</feature>
<feature type="region of interest" description="Disordered" evidence="4">
    <location>
        <begin position="562"/>
        <end position="587"/>
    </location>
</feature>
<feature type="compositionally biased region" description="Low complexity" evidence="4">
    <location>
        <begin position="35"/>
        <end position="47"/>
    </location>
</feature>
<feature type="compositionally biased region" description="Polar residues" evidence="4">
    <location>
        <begin position="520"/>
        <end position="529"/>
    </location>
</feature>
<feature type="compositionally biased region" description="Basic and acidic residues" evidence="4">
    <location>
        <begin position="530"/>
        <end position="541"/>
    </location>
</feature>
<feature type="compositionally biased region" description="Polar residues" evidence="4">
    <location>
        <begin position="569"/>
        <end position="579"/>
    </location>
</feature>
<feature type="active site" description="Proton acceptor" evidence="2 3">
    <location>
        <position position="259"/>
    </location>
</feature>
<feature type="binding site" evidence="2">
    <location>
        <begin position="94"/>
        <end position="102"/>
    </location>
    <ligand>
        <name>ATP</name>
        <dbReference type="ChEBI" id="CHEBI:30616"/>
    </ligand>
</feature>
<feature type="binding site" evidence="2">
    <location>
        <position position="117"/>
    </location>
    <ligand>
        <name>ATP</name>
        <dbReference type="ChEBI" id="CHEBI:30616"/>
    </ligand>
</feature>
<feature type="modified residue" description="Phosphoserine" evidence="9">
    <location>
        <position position="152"/>
    </location>
</feature>
<feature type="modified residue" description="Phosphoserine" evidence="10">
    <location>
        <position position="516"/>
    </location>
</feature>
<feature type="modified residue" description="Phosphoserine" evidence="9 10">
    <location>
        <position position="519"/>
    </location>
</feature>
<feature type="mutagenesis site" description="Allows selective inhibition in vivo." evidence="5">
    <original>T</original>
    <variation>G</variation>
    <location>
        <position position="200"/>
    </location>
</feature>
<feature type="sequence conflict" description="In Ref. 1; AAA02892." evidence="8" ref="1">
    <original>E</original>
    <variation>Y</variation>
    <location>
        <position position="390"/>
    </location>
</feature>
<feature type="sequence conflict" description="In Ref. 1; AAA02892." evidence="8" ref="1">
    <original>TV</original>
    <variation>SD</variation>
    <location>
        <begin position="484"/>
        <end position="485"/>
    </location>
</feature>
<evidence type="ECO:0000250" key="1"/>
<evidence type="ECO:0000255" key="2">
    <source>
        <dbReference type="PROSITE-ProRule" id="PRU00159"/>
    </source>
</evidence>
<evidence type="ECO:0000255" key="3">
    <source>
        <dbReference type="PROSITE-ProRule" id="PRU10027"/>
    </source>
</evidence>
<evidence type="ECO:0000256" key="4">
    <source>
        <dbReference type="SAM" id="MobiDB-lite"/>
    </source>
</evidence>
<evidence type="ECO:0000269" key="5">
    <source>
    </source>
</evidence>
<evidence type="ECO:0000269" key="6">
    <source>
    </source>
</evidence>
<evidence type="ECO:0000269" key="7">
    <source>
    </source>
</evidence>
<evidence type="ECO:0000305" key="8"/>
<evidence type="ECO:0007744" key="9">
    <source>
    </source>
</evidence>
<evidence type="ECO:0007744" key="10">
    <source>
    </source>
</evidence>
<protein>
    <recommendedName>
        <fullName>Serine/threonine-protein kinase ELM1</fullName>
        <ecNumber>2.7.11.1</ecNumber>
    </recommendedName>
</protein>
<reference key="1">
    <citation type="journal article" date="1993" name="Mol. Cell. Biol.">
        <title>Regulation of dimorphism in Saccharomyces cerevisiae: involvement of the novel protein kinase homolog Elm1p and protein phosphatase 2A.</title>
        <authorList>
            <person name="Blacketer M.J."/>
            <person name="Koehler C.M."/>
            <person name="Coats S.G."/>
            <person name="Myers A.M."/>
            <person name="Madaule P."/>
        </authorList>
    </citation>
    <scope>NUCLEOTIDE SEQUENCE</scope>
    <scope>FUNCTION</scope>
</reference>
<reference key="2">
    <citation type="journal article" date="1993" name="Yeast">
        <title>The sequence of a 17.5 kb DNA fragment on the left arm of yeast chromosome XI identifies the protein kinase gene ELM1, the DNA primase gene PRI2, a new gene encoding a putative histone and seven new open reading frames.</title>
        <authorList>
            <person name="Purnelle B."/>
            <person name="Tettelin H."/>
            <person name="van Dyck L."/>
            <person name="Skala J."/>
            <person name="Goffeau A."/>
        </authorList>
    </citation>
    <scope>NUCLEOTIDE SEQUENCE [GENOMIC DNA]</scope>
    <source>
        <strain>ATCC 204508 / S288c</strain>
    </source>
</reference>
<reference key="3">
    <citation type="journal article" date="1994" name="Nature">
        <title>Complete DNA sequence of yeast chromosome XI.</title>
        <authorList>
            <person name="Dujon B."/>
            <person name="Alexandraki D."/>
            <person name="Andre B."/>
            <person name="Ansorge W."/>
            <person name="Baladron V."/>
            <person name="Ballesta J.P.G."/>
            <person name="Banrevi A."/>
            <person name="Bolle P.-A."/>
            <person name="Bolotin-Fukuhara M."/>
            <person name="Bossier P."/>
            <person name="Bou G."/>
            <person name="Boyer J."/>
            <person name="Buitrago M.J."/>
            <person name="Cheret G."/>
            <person name="Colleaux L."/>
            <person name="Daignan-Fornier B."/>
            <person name="del Rey F."/>
            <person name="Dion C."/>
            <person name="Domdey H."/>
            <person name="Duesterhoeft A."/>
            <person name="Duesterhus S."/>
            <person name="Entian K.-D."/>
            <person name="Erfle H."/>
            <person name="Esteban P.F."/>
            <person name="Feldmann H."/>
            <person name="Fernandes L."/>
            <person name="Fobo G.M."/>
            <person name="Fritz C."/>
            <person name="Fukuhara H."/>
            <person name="Gabel C."/>
            <person name="Gaillon L."/>
            <person name="Garcia-Cantalejo J.M."/>
            <person name="Garcia-Ramirez J.J."/>
            <person name="Gent M.E."/>
            <person name="Ghazvini M."/>
            <person name="Goffeau A."/>
            <person name="Gonzalez A."/>
            <person name="Grothues D."/>
            <person name="Guerreiro P."/>
            <person name="Hegemann J.H."/>
            <person name="Hewitt N."/>
            <person name="Hilger F."/>
            <person name="Hollenberg C.P."/>
            <person name="Horaitis O."/>
            <person name="Indge K.J."/>
            <person name="Jacquier A."/>
            <person name="James C.M."/>
            <person name="Jauniaux J.-C."/>
            <person name="Jimenez A."/>
            <person name="Keuchel H."/>
            <person name="Kirchrath L."/>
            <person name="Kleine K."/>
            <person name="Koetter P."/>
            <person name="Legrain P."/>
            <person name="Liebl S."/>
            <person name="Louis E.J."/>
            <person name="Maia e Silva A."/>
            <person name="Marck C."/>
            <person name="Monnier A.-L."/>
            <person name="Moestl D."/>
            <person name="Mueller S."/>
            <person name="Obermaier B."/>
            <person name="Oliver S.G."/>
            <person name="Pallier C."/>
            <person name="Pascolo S."/>
            <person name="Pfeiffer F."/>
            <person name="Philippsen P."/>
            <person name="Planta R.J."/>
            <person name="Pohl F.M."/>
            <person name="Pohl T.M."/>
            <person name="Poehlmann R."/>
            <person name="Portetelle D."/>
            <person name="Purnelle B."/>
            <person name="Puzos V."/>
            <person name="Ramezani Rad M."/>
            <person name="Rasmussen S.W."/>
            <person name="Remacha M.A."/>
            <person name="Revuelta J.L."/>
            <person name="Richard G.-F."/>
            <person name="Rieger M."/>
            <person name="Rodrigues-Pousada C."/>
            <person name="Rose M."/>
            <person name="Rupp T."/>
            <person name="Santos M.A."/>
            <person name="Schwager C."/>
            <person name="Sensen C."/>
            <person name="Skala J."/>
            <person name="Soares H."/>
            <person name="Sor F."/>
            <person name="Stegemann J."/>
            <person name="Tettelin H."/>
            <person name="Thierry A."/>
            <person name="Tzermia M."/>
            <person name="Urrestarazu L.A."/>
            <person name="van Dyck L."/>
            <person name="van Vliet-Reedijk J.C."/>
            <person name="Valens M."/>
            <person name="Vandenbol M."/>
            <person name="Vilela C."/>
            <person name="Vissers S."/>
            <person name="von Wettstein D."/>
            <person name="Voss H."/>
            <person name="Wiemann S."/>
            <person name="Xu G."/>
            <person name="Zimmermann J."/>
            <person name="Haasemann M."/>
            <person name="Becker I."/>
            <person name="Mewes H.-W."/>
        </authorList>
    </citation>
    <scope>NUCLEOTIDE SEQUENCE [LARGE SCALE GENOMIC DNA]</scope>
    <source>
        <strain>ATCC 204508 / S288c</strain>
    </source>
</reference>
<reference key="4">
    <citation type="journal article" date="2014" name="G3 (Bethesda)">
        <title>The reference genome sequence of Saccharomyces cerevisiae: Then and now.</title>
        <authorList>
            <person name="Engel S.R."/>
            <person name="Dietrich F.S."/>
            <person name="Fisk D.G."/>
            <person name="Binkley G."/>
            <person name="Balakrishnan R."/>
            <person name="Costanzo M.C."/>
            <person name="Dwight S.S."/>
            <person name="Hitz B.C."/>
            <person name="Karra K."/>
            <person name="Nash R.S."/>
            <person name="Weng S."/>
            <person name="Wong E.D."/>
            <person name="Lloyd P."/>
            <person name="Skrzypek M.S."/>
            <person name="Miyasato S.R."/>
            <person name="Simison M."/>
            <person name="Cherry J.M."/>
        </authorList>
    </citation>
    <scope>GENOME REANNOTATION</scope>
    <source>
        <strain>ATCC 204508 / S288c</strain>
    </source>
</reference>
<reference key="5">
    <citation type="journal article" date="2003" name="Mol. Cell. Biol.">
        <title>Specific inhibition of Elm1 kinase activity reveals functions required for early G1 events.</title>
        <authorList>
            <person name="Sreenivasan A."/>
            <person name="Bishop A.C."/>
            <person name="Shokat K.M."/>
            <person name="Kellogg D.R."/>
        </authorList>
    </citation>
    <scope>FUNCTION</scope>
    <scope>MUTAGENESIS OF THR-200</scope>
</reference>
<reference key="6">
    <citation type="journal article" date="2003" name="Nature">
        <title>Global analysis of protein expression in yeast.</title>
        <authorList>
            <person name="Ghaemmaghami S."/>
            <person name="Huh W.-K."/>
            <person name="Bower K."/>
            <person name="Howson R.W."/>
            <person name="Belle A."/>
            <person name="Dephoure N."/>
            <person name="O'Shea E.K."/>
            <person name="Weissman J.S."/>
        </authorList>
    </citation>
    <scope>LEVEL OF PROTEIN EXPRESSION [LARGE SCALE ANALYSIS]</scope>
</reference>
<reference key="7">
    <citation type="journal article" date="2008" name="Mol. Cell. Proteomics">
        <title>A multidimensional chromatography technology for in-depth phosphoproteome analysis.</title>
        <authorList>
            <person name="Albuquerque C.P."/>
            <person name="Smolka M.B."/>
            <person name="Payne S.H."/>
            <person name="Bafna V."/>
            <person name="Eng J."/>
            <person name="Zhou H."/>
        </authorList>
    </citation>
    <scope>PHOSPHORYLATION [LARGE SCALE ANALYSIS] AT SER-152 AND SER-519</scope>
    <scope>IDENTIFICATION BY MASS SPECTROMETRY [LARGE SCALE ANALYSIS]</scope>
</reference>
<reference key="8">
    <citation type="journal article" date="2009" name="Science">
        <title>Global analysis of Cdk1 substrate phosphorylation sites provides insights into evolution.</title>
        <authorList>
            <person name="Holt L.J."/>
            <person name="Tuch B.B."/>
            <person name="Villen J."/>
            <person name="Johnson A.D."/>
            <person name="Gygi S.P."/>
            <person name="Morgan D.O."/>
        </authorList>
    </citation>
    <scope>PHOSPHORYLATION [LARGE SCALE ANALYSIS] AT SER-516 AND SER-519</scope>
    <scope>IDENTIFICATION BY MASS SPECTROMETRY [LARGE SCALE ANALYSIS]</scope>
</reference>
<name>ELM1_YEAST</name>